<keyword id="KW-0186">Copper</keyword>
<keyword id="KW-0249">Electron transport</keyword>
<keyword id="KW-0460">Magnesium</keyword>
<keyword id="KW-0472">Membrane</keyword>
<keyword id="KW-0479">Metal-binding</keyword>
<keyword id="KW-0496">Mitochondrion</keyword>
<keyword id="KW-0999">Mitochondrion inner membrane</keyword>
<keyword id="KW-0679">Respiratory chain</keyword>
<keyword id="KW-1278">Translocase</keyword>
<keyword id="KW-0812">Transmembrane</keyword>
<keyword id="KW-1133">Transmembrane helix</keyword>
<keyword id="KW-0813">Transport</keyword>
<comment type="function">
    <text evidence="2">Component of the cytochrome c oxidase, the last enzyme in the mitochondrial electron transport chain which drives oxidative phosphorylation. The respiratory chain contains 3 multisubunit complexes succinate dehydrogenase (complex II, CII), ubiquinol-cytochrome c oxidoreductase (cytochrome b-c1 complex, complex III, CIII) and cytochrome c oxidase (complex IV, CIV), that cooperate to transfer electrons derived from NADH and succinate to molecular oxygen, creating an electrochemical gradient over the inner membrane that drives transmembrane transport and the ATP synthase. Cytochrome c oxidase is the component of the respiratory chain that catalyzes the reduction of oxygen to water. Electrons originating from reduced cytochrome c in the intermembrane space (IMS) are transferred via the dinuclear copper A center (CU(A)) of subunit 2 and heme A of subunit 1 to the active site in subunit 1, a binuclear center (BNC) formed by heme A3 and copper B (CU(B)). The BNC reduces molecular oxygen to 2 water molecules using 4 electrons from cytochrome c in the IMS and 4 protons from the mitochondrial matrix.</text>
</comment>
<comment type="catalytic activity">
    <reaction evidence="2">
        <text>4 Fe(II)-[cytochrome c] + O2 + 8 H(+)(in) = 4 Fe(III)-[cytochrome c] + 2 H2O + 4 H(+)(out)</text>
        <dbReference type="Rhea" id="RHEA:11436"/>
        <dbReference type="Rhea" id="RHEA-COMP:10350"/>
        <dbReference type="Rhea" id="RHEA-COMP:14399"/>
        <dbReference type="ChEBI" id="CHEBI:15377"/>
        <dbReference type="ChEBI" id="CHEBI:15378"/>
        <dbReference type="ChEBI" id="CHEBI:15379"/>
        <dbReference type="ChEBI" id="CHEBI:29033"/>
        <dbReference type="ChEBI" id="CHEBI:29034"/>
        <dbReference type="EC" id="7.1.1.9"/>
    </reaction>
    <physiologicalReaction direction="left-to-right" evidence="2">
        <dbReference type="Rhea" id="RHEA:11437"/>
    </physiologicalReaction>
</comment>
<comment type="cofactor">
    <cofactor evidence="3">
        <name>Cu cation</name>
        <dbReference type="ChEBI" id="CHEBI:23378"/>
    </cofactor>
    <text evidence="3">Binds a dinuclear copper A center per subunit.</text>
</comment>
<comment type="subunit">
    <text evidence="1 3">Component of the cytochrome c oxidase (complex IV, CIV), a multisubunit enzyme composed of 14 subunits. The complex is composed of a catalytic core of 3 subunits MT-CO1, MT-CO2 and MT-CO3, encoded in the mitochondrial DNA, and 11 supernumerary subunits COX4I, COX5A, COX5B, COX6A, COX6B, COX6C, COX7A, COX7B, COX7C, COX8 and NDUFA4, which are encoded in the nuclear genome. The complex exists as a monomer or a dimer and forms supercomplexes (SCs) in the inner mitochondrial membrane with NADH-ubiquinone oxidoreductase (complex I, CI) and ubiquinol-cytochrome c oxidoreductase (cytochrome b-c1 complex, complex III, CIII), resulting in different assemblies (supercomplex SCI(1)III(2)IV(1) and megacomplex MCI(2)III(2)IV(2)) (By similarity). Found in a complex with TMEM177, COA6, COX18, COX20, SCO1 and SCO2. Interacts with TMEM177 in a COX20-dependent manner. Interacts with COX20. Interacts with COX16 (By similarity).</text>
</comment>
<comment type="subcellular location">
    <subcellularLocation>
        <location evidence="3">Mitochondrion inner membrane</location>
        <topology evidence="3">Multi-pass membrane protein</topology>
    </subcellularLocation>
</comment>
<comment type="similarity">
    <text evidence="4">Belongs to the cytochrome c oxidase subunit 2 family.</text>
</comment>
<reference key="1">
    <citation type="journal article" date="1998" name="J. Mol. Evol.">
        <title>The mitochondrial DNA molecule of the hagfish (Myxine glutinosa) and vertebrate phylogeny.</title>
        <authorList>
            <person name="Rasmussen A.S."/>
            <person name="Janke A."/>
            <person name="Arnason U."/>
        </authorList>
    </citation>
    <scope>NUCLEOTIDE SEQUENCE [GENOMIC DNA]</scope>
</reference>
<reference key="2">
    <citation type="journal article" date="2001" name="J. Mol. Evol.">
        <title>The complete mitochondrial genome of the hagfish Myxine glutinosa: unique features of the control region.</title>
        <authorList>
            <person name="Delarbre C."/>
            <person name="Rasmussen A.S."/>
            <person name="Arnason U."/>
            <person name="Gachelin G."/>
        </authorList>
    </citation>
    <scope>NUCLEOTIDE SEQUENCE [GENOMIC DNA]</scope>
</reference>
<evidence type="ECO:0000250" key="1">
    <source>
        <dbReference type="UniProtKB" id="P00403"/>
    </source>
</evidence>
<evidence type="ECO:0000250" key="2">
    <source>
        <dbReference type="UniProtKB" id="P00410"/>
    </source>
</evidence>
<evidence type="ECO:0000250" key="3">
    <source>
        <dbReference type="UniProtKB" id="P68530"/>
    </source>
</evidence>
<evidence type="ECO:0000305" key="4"/>
<organism>
    <name type="scientific">Myxine glutinosa</name>
    <name type="common">Atlantic hagfish</name>
    <dbReference type="NCBI Taxonomy" id="7769"/>
    <lineage>
        <taxon>Eukaryota</taxon>
        <taxon>Metazoa</taxon>
        <taxon>Chordata</taxon>
        <taxon>Craniata</taxon>
        <taxon>Vertebrata</taxon>
        <taxon>Cyclostomata</taxon>
        <taxon>Myxini</taxon>
        <taxon>Myxiniformes</taxon>
        <taxon>Myxinidae</taxon>
        <taxon>Myxininae</taxon>
        <taxon>Myxine</taxon>
    </lineage>
</organism>
<name>COX2_MYXGL</name>
<geneLocation type="mitochondrion"/>
<feature type="chain" id="PRO_0000183637" description="Cytochrome c oxidase subunit 2">
    <location>
        <begin position="1"/>
        <end position="229"/>
    </location>
</feature>
<feature type="topological domain" description="Mitochondrial intermembrane" evidence="3">
    <location>
        <begin position="1"/>
        <end position="14"/>
    </location>
</feature>
<feature type="transmembrane region" description="Helical; Name=I" evidence="3">
    <location>
        <begin position="15"/>
        <end position="45"/>
    </location>
</feature>
<feature type="topological domain" description="Mitochondrial matrix" evidence="3">
    <location>
        <begin position="46"/>
        <end position="59"/>
    </location>
</feature>
<feature type="transmembrane region" description="Helical; Name=II" evidence="3">
    <location>
        <begin position="60"/>
        <end position="87"/>
    </location>
</feature>
<feature type="topological domain" description="Mitochondrial intermembrane" evidence="3">
    <location>
        <begin position="88"/>
        <end position="229"/>
    </location>
</feature>
<feature type="binding site" evidence="3">
    <location>
        <position position="162"/>
    </location>
    <ligand>
        <name>Cu cation</name>
        <dbReference type="ChEBI" id="CHEBI:23378"/>
        <label>A1</label>
    </ligand>
</feature>
<feature type="binding site" evidence="3">
    <location>
        <position position="197"/>
    </location>
    <ligand>
        <name>Cu cation</name>
        <dbReference type="ChEBI" id="CHEBI:23378"/>
        <label>A1</label>
    </ligand>
</feature>
<feature type="binding site" evidence="3">
    <location>
        <position position="197"/>
    </location>
    <ligand>
        <name>Cu cation</name>
        <dbReference type="ChEBI" id="CHEBI:23378"/>
        <label>A2</label>
    </ligand>
</feature>
<feature type="binding site" evidence="3">
    <location>
        <position position="199"/>
    </location>
    <ligand>
        <name>Cu cation</name>
        <dbReference type="ChEBI" id="CHEBI:23378"/>
        <label>A2</label>
    </ligand>
</feature>
<feature type="binding site" evidence="3">
    <location>
        <position position="199"/>
    </location>
    <ligand>
        <name>Mg(2+)</name>
        <dbReference type="ChEBI" id="CHEBI:18420"/>
        <note>ligand shared with MT-CO1</note>
    </ligand>
</feature>
<feature type="binding site" evidence="3">
    <location>
        <position position="201"/>
    </location>
    <ligand>
        <name>Cu cation</name>
        <dbReference type="ChEBI" id="CHEBI:23378"/>
        <label>A1</label>
    </ligand>
</feature>
<feature type="binding site" evidence="3">
    <location>
        <position position="201"/>
    </location>
    <ligand>
        <name>Cu cation</name>
        <dbReference type="ChEBI" id="CHEBI:23378"/>
        <label>A2</label>
    </ligand>
</feature>
<feature type="binding site" evidence="3">
    <location>
        <position position="205"/>
    </location>
    <ligand>
        <name>Cu cation</name>
        <dbReference type="ChEBI" id="CHEBI:23378"/>
        <label>A2</label>
    </ligand>
</feature>
<feature type="binding site" evidence="3">
    <location>
        <position position="208"/>
    </location>
    <ligand>
        <name>Cu cation</name>
        <dbReference type="ChEBI" id="CHEBI:23378"/>
        <label>A1</label>
    </ligand>
</feature>
<feature type="sequence conflict" description="In Ref. 1; CAA75482." evidence="4" ref="1">
    <original>V</original>
    <variation>I</variation>
    <location>
        <position position="41"/>
    </location>
</feature>
<feature type="sequence conflict" description="In Ref. 1; CAA75482." evidence="4" ref="1">
    <original>N</original>
    <variation>K</variation>
    <location>
        <position position="131"/>
    </location>
</feature>
<feature type="sequence conflict" description="In Ref. 1; CAA75482." evidence="4" ref="1">
    <original>A</original>
    <variation>T</variation>
    <location>
        <position position="211"/>
    </location>
</feature>
<sequence length="229" mass="26070">MANHLQFNFQDATSPLMQELVKFHDHSLTILFFISALILYVLMMTSLSKLTNKNILDSQEIEMVWTVIPAFILIMLALPSIQILYLMDEIASPDITIKTVGHQWYWTYEFSDLSKESEIESYMLPTADLQNGDFRLLEVDNRISVPMDSKIRMLITSEDVLHAWTLPSMGIKVDAVPGRLNQVTFSSSLPGLFFGQCSEICGANHSFMPIAMEVIPLKTFESWIIKLSL</sequence>
<proteinExistence type="inferred from homology"/>
<protein>
    <recommendedName>
        <fullName>Cytochrome c oxidase subunit 2</fullName>
        <ecNumber>7.1.1.9</ecNumber>
    </recommendedName>
    <alternativeName>
        <fullName>Cytochrome c oxidase polypeptide II</fullName>
    </alternativeName>
</protein>
<accession>Q9G2X2</accession>
<accession>O63914</accession>
<gene>
    <name type="primary">MT-CO2</name>
    <name type="synonym">COII</name>
    <name type="synonym">COXII</name>
    <name type="synonym">MTCO2</name>
</gene>
<dbReference type="EC" id="7.1.1.9"/>
<dbReference type="EMBL" id="Y15183">
    <property type="protein sequence ID" value="CAA75482.2"/>
    <property type="molecule type" value="Genomic_DNA"/>
</dbReference>
<dbReference type="EMBL" id="AJ404477">
    <property type="protein sequence ID" value="CAC20652.1"/>
    <property type="molecule type" value="Genomic_DNA"/>
</dbReference>
<dbReference type="SMR" id="Q9G2X2"/>
<dbReference type="CTD" id="4513"/>
<dbReference type="GO" id="GO:0005743">
    <property type="term" value="C:mitochondrial inner membrane"/>
    <property type="evidence" value="ECO:0007669"/>
    <property type="project" value="UniProtKB-SubCell"/>
</dbReference>
<dbReference type="GO" id="GO:0005507">
    <property type="term" value="F:copper ion binding"/>
    <property type="evidence" value="ECO:0007669"/>
    <property type="project" value="InterPro"/>
</dbReference>
<dbReference type="GO" id="GO:0004129">
    <property type="term" value="F:cytochrome-c oxidase activity"/>
    <property type="evidence" value="ECO:0007669"/>
    <property type="project" value="UniProtKB-EC"/>
</dbReference>
<dbReference type="GO" id="GO:0042773">
    <property type="term" value="P:ATP synthesis coupled electron transport"/>
    <property type="evidence" value="ECO:0007669"/>
    <property type="project" value="TreeGrafter"/>
</dbReference>
<dbReference type="CDD" id="cd13912">
    <property type="entry name" value="CcO_II_C"/>
    <property type="match status" value="1"/>
</dbReference>
<dbReference type="FunFam" id="1.10.287.90:FF:000001">
    <property type="entry name" value="Cytochrome c oxidase subunit 2"/>
    <property type="match status" value="1"/>
</dbReference>
<dbReference type="FunFam" id="2.60.40.420:FF:000001">
    <property type="entry name" value="Cytochrome c oxidase subunit 2"/>
    <property type="match status" value="1"/>
</dbReference>
<dbReference type="Gene3D" id="1.10.287.90">
    <property type="match status" value="1"/>
</dbReference>
<dbReference type="Gene3D" id="2.60.40.420">
    <property type="entry name" value="Cupredoxins - blue copper proteins"/>
    <property type="match status" value="1"/>
</dbReference>
<dbReference type="InterPro" id="IPR045187">
    <property type="entry name" value="CcO_II"/>
</dbReference>
<dbReference type="InterPro" id="IPR002429">
    <property type="entry name" value="CcO_II-like_C"/>
</dbReference>
<dbReference type="InterPro" id="IPR034210">
    <property type="entry name" value="CcO_II_C"/>
</dbReference>
<dbReference type="InterPro" id="IPR001505">
    <property type="entry name" value="Copper_CuA"/>
</dbReference>
<dbReference type="InterPro" id="IPR008972">
    <property type="entry name" value="Cupredoxin"/>
</dbReference>
<dbReference type="InterPro" id="IPR014222">
    <property type="entry name" value="Cyt_c_oxidase_su2"/>
</dbReference>
<dbReference type="InterPro" id="IPR011759">
    <property type="entry name" value="Cyt_c_oxidase_su2_TM_dom"/>
</dbReference>
<dbReference type="InterPro" id="IPR036257">
    <property type="entry name" value="Cyt_c_oxidase_su2_TM_sf"/>
</dbReference>
<dbReference type="NCBIfam" id="TIGR02866">
    <property type="entry name" value="CoxB"/>
    <property type="match status" value="1"/>
</dbReference>
<dbReference type="PANTHER" id="PTHR22888:SF9">
    <property type="entry name" value="CYTOCHROME C OXIDASE SUBUNIT 2"/>
    <property type="match status" value="1"/>
</dbReference>
<dbReference type="PANTHER" id="PTHR22888">
    <property type="entry name" value="CYTOCHROME C OXIDASE, SUBUNIT II"/>
    <property type="match status" value="1"/>
</dbReference>
<dbReference type="Pfam" id="PF00116">
    <property type="entry name" value="COX2"/>
    <property type="match status" value="1"/>
</dbReference>
<dbReference type="Pfam" id="PF02790">
    <property type="entry name" value="COX2_TM"/>
    <property type="match status" value="1"/>
</dbReference>
<dbReference type="PRINTS" id="PR01166">
    <property type="entry name" value="CYCOXIDASEII"/>
</dbReference>
<dbReference type="SUPFAM" id="SSF49503">
    <property type="entry name" value="Cupredoxins"/>
    <property type="match status" value="1"/>
</dbReference>
<dbReference type="SUPFAM" id="SSF81464">
    <property type="entry name" value="Cytochrome c oxidase subunit II-like, transmembrane region"/>
    <property type="match status" value="1"/>
</dbReference>
<dbReference type="PROSITE" id="PS00078">
    <property type="entry name" value="COX2"/>
    <property type="match status" value="1"/>
</dbReference>
<dbReference type="PROSITE" id="PS50857">
    <property type="entry name" value="COX2_CUA"/>
    <property type="match status" value="1"/>
</dbReference>
<dbReference type="PROSITE" id="PS50999">
    <property type="entry name" value="COX2_TM"/>
    <property type="match status" value="1"/>
</dbReference>